<organism>
    <name type="scientific">Talaromyces stipitatus (strain ATCC 10500 / CBS 375.48 / QM 6759 / NRRL 1006)</name>
    <name type="common">Penicillium stipitatum</name>
    <dbReference type="NCBI Taxonomy" id="441959"/>
    <lineage>
        <taxon>Eukaryota</taxon>
        <taxon>Fungi</taxon>
        <taxon>Dikarya</taxon>
        <taxon>Ascomycota</taxon>
        <taxon>Pezizomycotina</taxon>
        <taxon>Eurotiomycetes</taxon>
        <taxon>Eurotiomycetidae</taxon>
        <taxon>Eurotiales</taxon>
        <taxon>Trichocomaceae</taxon>
        <taxon>Talaromyces</taxon>
        <taxon>Talaromyces sect. Talaromyces</taxon>
    </lineage>
</organism>
<reference key="1">
    <citation type="journal article" date="2015" name="Genome Announc.">
        <title>Genome sequence of the AIDS-associated pathogen Penicillium marneffei (ATCC18224) and its near taxonomic relative Talaromyces stipitatus (ATCC10500).</title>
        <authorList>
            <person name="Nierman W.C."/>
            <person name="Fedorova-Abrams N.D."/>
            <person name="Andrianopoulos A."/>
        </authorList>
    </citation>
    <scope>NUCLEOTIDE SEQUENCE [LARGE SCALE GENOMIC DNA]</scope>
    <source>
        <strain>ATCC 10500 / CBS 375.48 / QM 6759 / NRRL 1006</strain>
    </source>
</reference>
<keyword id="KW-0121">Carboxypeptidase</keyword>
<keyword id="KW-1015">Disulfide bond</keyword>
<keyword id="KW-0325">Glycoprotein</keyword>
<keyword id="KW-0378">Hydrolase</keyword>
<keyword id="KW-0645">Protease</keyword>
<keyword id="KW-1185">Reference proteome</keyword>
<keyword id="KW-0732">Signal</keyword>
<keyword id="KW-0926">Vacuole</keyword>
<keyword id="KW-0865">Zymogen</keyword>
<comment type="function">
    <text evidence="1">Vacuolar carboxypeptidase involved in degradation of small peptides. Digests preferentially peptides containing an aliphatic or hydrophobic residue in P1' position, as well as methionine, leucine or phenylalanine in P1 position of ester substrate (By similarity).</text>
</comment>
<comment type="catalytic activity">
    <reaction evidence="3">
        <text>Release of a C-terminal amino acid with broad specificity.</text>
        <dbReference type="EC" id="3.4.16.5"/>
    </reaction>
</comment>
<comment type="subcellular location">
    <subcellularLocation>
        <location evidence="1">Vacuole</location>
    </subcellularLocation>
</comment>
<comment type="similarity">
    <text evidence="4">Belongs to the peptidase S10 family.</text>
</comment>
<gene>
    <name type="primary">cpyA</name>
    <name type="ORF">TSTA_083730</name>
</gene>
<proteinExistence type="inferred from homology"/>
<name>CBPYA_TALSN</name>
<feature type="signal peptide" evidence="2">
    <location>
        <begin position="1"/>
        <end position="17"/>
    </location>
</feature>
<feature type="propeptide" id="PRO_0000407480" evidence="1">
    <location>
        <begin position="18"/>
        <end position="134"/>
    </location>
</feature>
<feature type="chain" id="PRO_0000407481" description="Carboxypeptidase Y homolog A">
    <location>
        <begin position="135"/>
        <end position="553"/>
    </location>
</feature>
<feature type="active site" evidence="3">
    <location>
        <position position="276"/>
    </location>
</feature>
<feature type="active site" evidence="3">
    <location>
        <position position="467"/>
    </location>
</feature>
<feature type="active site" evidence="3">
    <location>
        <position position="529"/>
    </location>
</feature>
<feature type="glycosylation site" description="N-linked (GlcNAc...) asparagine" evidence="2">
    <location>
        <position position="220"/>
    </location>
</feature>
<feature type="glycosylation site" description="N-linked (GlcNAc...) asparagine" evidence="2">
    <location>
        <position position="518"/>
    </location>
</feature>
<feature type="disulfide bond" evidence="1">
    <location>
        <begin position="189"/>
        <end position="428"/>
    </location>
</feature>
<feature type="disulfide bond" evidence="1">
    <location>
        <begin position="323"/>
        <end position="337"/>
    </location>
</feature>
<feature type="disulfide bond" evidence="1">
    <location>
        <begin position="347"/>
        <end position="370"/>
    </location>
</feature>
<feature type="disulfide bond" evidence="1">
    <location>
        <begin position="354"/>
        <end position="363"/>
    </location>
</feature>
<feature type="disulfide bond" evidence="1">
    <location>
        <begin position="392"/>
        <end position="398"/>
    </location>
</feature>
<dbReference type="EC" id="3.4.16.5"/>
<dbReference type="EMBL" id="EQ962653">
    <property type="protein sequence ID" value="EED21141.1"/>
    <property type="molecule type" value="Genomic_DNA"/>
</dbReference>
<dbReference type="RefSeq" id="XP_002478104.1">
    <property type="nucleotide sequence ID" value="XM_002478059.1"/>
</dbReference>
<dbReference type="SMR" id="B8M044"/>
<dbReference type="FunCoup" id="B8M044">
    <property type="interactions" value="887"/>
</dbReference>
<dbReference type="STRING" id="441959.B8M044"/>
<dbReference type="ESTHER" id="penmq-cbpya">
    <property type="family name" value="Carboxypeptidase_S10"/>
</dbReference>
<dbReference type="MEROPS" id="S10.001"/>
<dbReference type="GlyCosmos" id="B8M044">
    <property type="glycosylation" value="2 sites, No reported glycans"/>
</dbReference>
<dbReference type="GeneID" id="8101466"/>
<dbReference type="VEuPathDB" id="FungiDB:TSTA_083730"/>
<dbReference type="eggNOG" id="KOG1282">
    <property type="taxonomic scope" value="Eukaryota"/>
</dbReference>
<dbReference type="HOGENOM" id="CLU_008523_10_4_1"/>
<dbReference type="InParanoid" id="B8M044"/>
<dbReference type="OMA" id="GDWMKPF"/>
<dbReference type="OrthoDB" id="443318at2759"/>
<dbReference type="PhylomeDB" id="B8M044"/>
<dbReference type="Proteomes" id="UP000001745">
    <property type="component" value="Unassembled WGS sequence"/>
</dbReference>
<dbReference type="GO" id="GO:0000324">
    <property type="term" value="C:fungal-type vacuole"/>
    <property type="evidence" value="ECO:0007669"/>
    <property type="project" value="TreeGrafter"/>
</dbReference>
<dbReference type="GO" id="GO:0004185">
    <property type="term" value="F:serine-type carboxypeptidase activity"/>
    <property type="evidence" value="ECO:0007669"/>
    <property type="project" value="UniProtKB-EC"/>
</dbReference>
<dbReference type="GO" id="GO:0006508">
    <property type="term" value="P:proteolysis"/>
    <property type="evidence" value="ECO:0007669"/>
    <property type="project" value="UniProtKB-KW"/>
</dbReference>
<dbReference type="FunFam" id="1.10.287.410:FF:000001">
    <property type="entry name" value="Carboxypeptidase Y"/>
    <property type="match status" value="1"/>
</dbReference>
<dbReference type="Gene3D" id="1.10.287.410">
    <property type="match status" value="1"/>
</dbReference>
<dbReference type="Gene3D" id="3.40.50.1820">
    <property type="entry name" value="alpha/beta hydrolase"/>
    <property type="match status" value="1"/>
</dbReference>
<dbReference type="InterPro" id="IPR029058">
    <property type="entry name" value="AB_hydrolase_fold"/>
</dbReference>
<dbReference type="InterPro" id="IPR001563">
    <property type="entry name" value="Peptidase_S10"/>
</dbReference>
<dbReference type="InterPro" id="IPR008442">
    <property type="entry name" value="Propeptide_carboxypepY"/>
</dbReference>
<dbReference type="InterPro" id="IPR018202">
    <property type="entry name" value="Ser_caboxypep_ser_AS"/>
</dbReference>
<dbReference type="PANTHER" id="PTHR11802:SF113">
    <property type="entry name" value="SERINE CARBOXYPEPTIDASE CTSA-4.1"/>
    <property type="match status" value="1"/>
</dbReference>
<dbReference type="PANTHER" id="PTHR11802">
    <property type="entry name" value="SERINE PROTEASE FAMILY S10 SERINE CARBOXYPEPTIDASE"/>
    <property type="match status" value="1"/>
</dbReference>
<dbReference type="Pfam" id="PF05388">
    <property type="entry name" value="Carbpep_Y_N"/>
    <property type="match status" value="1"/>
</dbReference>
<dbReference type="Pfam" id="PF00450">
    <property type="entry name" value="Peptidase_S10"/>
    <property type="match status" value="1"/>
</dbReference>
<dbReference type="PRINTS" id="PR00724">
    <property type="entry name" value="CRBOXYPTASEC"/>
</dbReference>
<dbReference type="SUPFAM" id="SSF53474">
    <property type="entry name" value="alpha/beta-Hydrolases"/>
    <property type="match status" value="1"/>
</dbReference>
<dbReference type="PROSITE" id="PS00131">
    <property type="entry name" value="CARBOXYPEPT_SER_SER"/>
    <property type="match status" value="1"/>
</dbReference>
<sequence length="553" mass="61898">MRVLSTTLLIGAAAAAVSPPQQVLQAPEEAVENTHKSSPSLAESLSQPLRELKEELKLLTNEVEEVWEEVSNIFPGALDNIFFSSAKKHTRRPDSHWDHIIRGSDVQNIWVENENGEKEREVGGRLEAFDLRVKAVDPSSLGIDPDVKQYSGYLDDNENDKHLFYWFFESRNDPKTDPVVLWLNGGPGCSSLTGLFFELGPSSIGKNIKPIYNPYSWNSNTSVIFLDQPVNVGFSYSGNSVSETSAAAKDVYALLTLFFKQFPEYSSQDFHIAGESYAGHYIPSFASEILSHKKRNINLKSVLIGNGLTDGLTQYEYYRPMACGDGGYPAVLDETTCRSMDNALGRCQSMIQSCYDSESAWTCVPASIYCNNALLGPYQRTGQNVYDVRKPCEDSSLCYADLEYVSTYLNQAEVMKALGAEVDSFDSCNFDINRNFLFKGDWMKPFHKLVPGLLEEIPVLIYAGDADFICNWLGNKAWTDALEWAGHEEYAATELEDLEIVDNKHKGKKIGQVKSSGNLTFMRLFGGGHMVPYDQPEASLEFFNRWIGGEWTK</sequence>
<protein>
    <recommendedName>
        <fullName>Carboxypeptidase Y homolog A</fullName>
        <ecNumber>3.4.16.5</ecNumber>
    </recommendedName>
</protein>
<accession>B8M044</accession>
<evidence type="ECO:0000250" key="1"/>
<evidence type="ECO:0000255" key="2"/>
<evidence type="ECO:0000255" key="3">
    <source>
        <dbReference type="PROSITE-ProRule" id="PRU10074"/>
    </source>
</evidence>
<evidence type="ECO:0000305" key="4"/>